<comment type="subunit">
    <text evidence="1">Component of the mitochondrial ribosome small subunit (28S) which comprises a 12S rRNA and about 30 distinct proteins.</text>
</comment>
<comment type="subcellular location">
    <subcellularLocation>
        <location evidence="1">Mitochondrion</location>
    </subcellularLocation>
</comment>
<comment type="similarity">
    <text evidence="2">Belongs to the mitochondrion-specific ribosomal protein mS25 family.</text>
</comment>
<accession>Q4QR80</accession>
<proteinExistence type="evidence at transcript level"/>
<sequence>MPMKGRFPIRRTLQYLGSGDVVFKESVKVMTVNYNTHGELGEGARKFVFFNIPQIQYKNPWVQIMLFKNMTPSPFLRFYLESGEQVLVDVETKSNTEIVEHIKKILGKKEETLREEELEKQQRFHPGNFGPRKYCLRECMCEVEGQVPCPGLVPLPKEMTGKYKAALKANT</sequence>
<reference key="1">
    <citation type="journal article" date="2004" name="Genome Res.">
        <title>The status, quality, and expansion of the NIH full-length cDNA project: the Mammalian Gene Collection (MGC).</title>
        <authorList>
            <consortium name="The MGC Project Team"/>
        </authorList>
    </citation>
    <scope>NUCLEOTIDE SEQUENCE [LARGE SCALE MRNA]</scope>
    <source>
        <tissue>Placenta</tissue>
    </source>
</reference>
<evidence type="ECO:0000250" key="1">
    <source>
        <dbReference type="UniProtKB" id="P82669"/>
    </source>
</evidence>
<evidence type="ECO:0000305" key="2"/>
<dbReference type="EMBL" id="BC097381">
    <property type="protein sequence ID" value="AAH97381.1"/>
    <property type="molecule type" value="mRNA"/>
</dbReference>
<dbReference type="RefSeq" id="NP_001020579.1">
    <property type="nucleotide sequence ID" value="NM_001025408.1"/>
</dbReference>
<dbReference type="SMR" id="Q4QR80"/>
<dbReference type="FunCoup" id="Q4QR80">
    <property type="interactions" value="2210"/>
</dbReference>
<dbReference type="STRING" id="10116.ENSRNOP00000014933"/>
<dbReference type="PhosphoSitePlus" id="Q4QR80"/>
<dbReference type="PaxDb" id="10116-ENSRNOP00000014933"/>
<dbReference type="Ensembl" id="ENSRNOT00000014933.6">
    <property type="protein sequence ID" value="ENSRNOP00000014933.4"/>
    <property type="gene ID" value="ENSRNOG00000010912.6"/>
</dbReference>
<dbReference type="GeneID" id="297459"/>
<dbReference type="KEGG" id="rno:297459"/>
<dbReference type="UCSC" id="RGD:1308770">
    <property type="organism name" value="rat"/>
</dbReference>
<dbReference type="AGR" id="RGD:1308770"/>
<dbReference type="CTD" id="64432"/>
<dbReference type="RGD" id="1308770">
    <property type="gene designation" value="Mrps25"/>
</dbReference>
<dbReference type="eggNOG" id="KOG4079">
    <property type="taxonomic scope" value="Eukaryota"/>
</dbReference>
<dbReference type="GeneTree" id="ENSGT00640000091558"/>
<dbReference type="HOGENOM" id="CLU_094727_0_0_1"/>
<dbReference type="InParanoid" id="Q4QR80"/>
<dbReference type="OMA" id="DHKQISQ"/>
<dbReference type="OrthoDB" id="29160at9989"/>
<dbReference type="PhylomeDB" id="Q4QR80"/>
<dbReference type="TreeFam" id="TF300292"/>
<dbReference type="Reactome" id="R-RNO-5389840">
    <property type="pathway name" value="Mitochondrial translation elongation"/>
</dbReference>
<dbReference type="Reactome" id="R-RNO-5419276">
    <property type="pathway name" value="Mitochondrial translation termination"/>
</dbReference>
<dbReference type="PRO" id="PR:Q4QR80"/>
<dbReference type="Proteomes" id="UP000002494">
    <property type="component" value="Chromosome 4"/>
</dbReference>
<dbReference type="Bgee" id="ENSRNOG00000010912">
    <property type="expression patterns" value="Expressed in adult mammalian kidney and 19 other cell types or tissues"/>
</dbReference>
<dbReference type="GO" id="GO:0005763">
    <property type="term" value="C:mitochondrial small ribosomal subunit"/>
    <property type="evidence" value="ECO:0000250"/>
    <property type="project" value="UniProtKB"/>
</dbReference>
<dbReference type="GO" id="GO:0005739">
    <property type="term" value="C:mitochondrion"/>
    <property type="evidence" value="ECO:0000318"/>
    <property type="project" value="GO_Central"/>
</dbReference>
<dbReference type="GO" id="GO:0003735">
    <property type="term" value="F:structural constituent of ribosome"/>
    <property type="evidence" value="ECO:0000318"/>
    <property type="project" value="GO_Central"/>
</dbReference>
<dbReference type="FunFam" id="3.40.30.10:FF:000103">
    <property type="entry name" value="28S ribosomal protein S25, mitochondrial"/>
    <property type="match status" value="1"/>
</dbReference>
<dbReference type="Gene3D" id="3.40.30.10">
    <property type="entry name" value="Glutaredoxin"/>
    <property type="match status" value="1"/>
</dbReference>
<dbReference type="InterPro" id="IPR007741">
    <property type="entry name" value="Ribosomal_mL43/mS25/NADH_DH"/>
</dbReference>
<dbReference type="InterPro" id="IPR040049">
    <property type="entry name" value="Ribosomal_mS25/mL61"/>
</dbReference>
<dbReference type="InterPro" id="IPR036249">
    <property type="entry name" value="Thioredoxin-like_sf"/>
</dbReference>
<dbReference type="PANTHER" id="PTHR13274">
    <property type="entry name" value="MITOCHONDRIAL RIBOSOMAL PROTEIN S25"/>
    <property type="match status" value="1"/>
</dbReference>
<dbReference type="PANTHER" id="PTHR13274:SF2">
    <property type="entry name" value="SMALL RIBOSOMAL SUBUNIT PROTEIN MS25"/>
    <property type="match status" value="1"/>
</dbReference>
<dbReference type="Pfam" id="PF05047">
    <property type="entry name" value="L51_S25_CI-B8"/>
    <property type="match status" value="1"/>
</dbReference>
<dbReference type="SMART" id="SM00916">
    <property type="entry name" value="L51_S25_CI-B8"/>
    <property type="match status" value="1"/>
</dbReference>
<dbReference type="SUPFAM" id="SSF52833">
    <property type="entry name" value="Thioredoxin-like"/>
    <property type="match status" value="1"/>
</dbReference>
<keyword id="KW-0496">Mitochondrion</keyword>
<keyword id="KW-1185">Reference proteome</keyword>
<keyword id="KW-0687">Ribonucleoprotein</keyword>
<keyword id="KW-0689">Ribosomal protein</keyword>
<feature type="chain" id="PRO_0000239920" description="Small ribosomal subunit protein mS25">
    <location>
        <begin position="1"/>
        <end position="171"/>
    </location>
</feature>
<organism>
    <name type="scientific">Rattus norvegicus</name>
    <name type="common">Rat</name>
    <dbReference type="NCBI Taxonomy" id="10116"/>
    <lineage>
        <taxon>Eukaryota</taxon>
        <taxon>Metazoa</taxon>
        <taxon>Chordata</taxon>
        <taxon>Craniata</taxon>
        <taxon>Vertebrata</taxon>
        <taxon>Euteleostomi</taxon>
        <taxon>Mammalia</taxon>
        <taxon>Eutheria</taxon>
        <taxon>Euarchontoglires</taxon>
        <taxon>Glires</taxon>
        <taxon>Rodentia</taxon>
        <taxon>Myomorpha</taxon>
        <taxon>Muroidea</taxon>
        <taxon>Muridae</taxon>
        <taxon>Murinae</taxon>
        <taxon>Rattus</taxon>
    </lineage>
</organism>
<name>RT25_RAT</name>
<gene>
    <name type="primary">Mrps25</name>
</gene>
<protein>
    <recommendedName>
        <fullName evidence="2">Small ribosomal subunit protein mS25</fullName>
    </recommendedName>
    <alternativeName>
        <fullName>28S ribosomal protein S25, mitochondrial</fullName>
        <shortName>MRP-S25</shortName>
        <shortName>S25mt</shortName>
    </alternativeName>
</protein>